<protein>
    <recommendedName>
        <fullName evidence="1">Recombination protein RecR</fullName>
    </recommendedName>
</protein>
<proteinExistence type="inferred from homology"/>
<organism>
    <name type="scientific">Streptococcus thermophilus (strain CNRZ 1066)</name>
    <dbReference type="NCBI Taxonomy" id="299768"/>
    <lineage>
        <taxon>Bacteria</taxon>
        <taxon>Bacillati</taxon>
        <taxon>Bacillota</taxon>
        <taxon>Bacilli</taxon>
        <taxon>Lactobacillales</taxon>
        <taxon>Streptococcaceae</taxon>
        <taxon>Streptococcus</taxon>
    </lineage>
</organism>
<gene>
    <name evidence="1" type="primary">recR</name>
    <name type="ordered locus">str0614</name>
</gene>
<name>RECR_STRT1</name>
<reference key="1">
    <citation type="journal article" date="2004" name="Nat. Biotechnol.">
        <title>Complete sequence and comparative genome analysis of the dairy bacterium Streptococcus thermophilus.</title>
        <authorList>
            <person name="Bolotin A."/>
            <person name="Quinquis B."/>
            <person name="Renault P."/>
            <person name="Sorokin A."/>
            <person name="Ehrlich S.D."/>
            <person name="Kulakauskas S."/>
            <person name="Lapidus A."/>
            <person name="Goltsman E."/>
            <person name="Mazur M."/>
            <person name="Pusch G.D."/>
            <person name="Fonstein M."/>
            <person name="Overbeek R."/>
            <person name="Kyprides N."/>
            <person name="Purnelle B."/>
            <person name="Prozzi D."/>
            <person name="Ngui K."/>
            <person name="Masuy D."/>
            <person name="Hancy F."/>
            <person name="Burteau S."/>
            <person name="Boutry M."/>
            <person name="Delcour J."/>
            <person name="Goffeau A."/>
            <person name="Hols P."/>
        </authorList>
    </citation>
    <scope>NUCLEOTIDE SEQUENCE [LARGE SCALE GENOMIC DNA]</scope>
    <source>
        <strain>CNRZ 1066</strain>
    </source>
</reference>
<accession>Q5M0P4</accession>
<keyword id="KW-0227">DNA damage</keyword>
<keyword id="KW-0233">DNA recombination</keyword>
<keyword id="KW-0234">DNA repair</keyword>
<keyword id="KW-0479">Metal-binding</keyword>
<keyword id="KW-0862">Zinc</keyword>
<keyword id="KW-0863">Zinc-finger</keyword>
<feature type="chain" id="PRO_0000190404" description="Recombination protein RecR">
    <location>
        <begin position="1"/>
        <end position="198"/>
    </location>
</feature>
<feature type="domain" description="Toprim" evidence="1">
    <location>
        <begin position="80"/>
        <end position="175"/>
    </location>
</feature>
<feature type="zinc finger region" description="C4-type" evidence="1">
    <location>
        <begin position="57"/>
        <end position="72"/>
    </location>
</feature>
<comment type="function">
    <text evidence="1">May play a role in DNA repair. It seems to be involved in an RecBC-independent recombinational process of DNA repair. It may act with RecF and RecO.</text>
</comment>
<comment type="similarity">
    <text evidence="1">Belongs to the RecR family.</text>
</comment>
<evidence type="ECO:0000255" key="1">
    <source>
        <dbReference type="HAMAP-Rule" id="MF_00017"/>
    </source>
</evidence>
<dbReference type="EMBL" id="CP000024">
    <property type="protein sequence ID" value="AAV62210.1"/>
    <property type="molecule type" value="Genomic_DNA"/>
</dbReference>
<dbReference type="RefSeq" id="WP_011225694.1">
    <property type="nucleotide sequence ID" value="NC_006449.1"/>
</dbReference>
<dbReference type="SMR" id="Q5M0P4"/>
<dbReference type="GeneID" id="66898520"/>
<dbReference type="KEGG" id="stc:str0614"/>
<dbReference type="HOGENOM" id="CLU_060739_1_0_9"/>
<dbReference type="GO" id="GO:0003677">
    <property type="term" value="F:DNA binding"/>
    <property type="evidence" value="ECO:0007669"/>
    <property type="project" value="UniProtKB-UniRule"/>
</dbReference>
<dbReference type="GO" id="GO:0008270">
    <property type="term" value="F:zinc ion binding"/>
    <property type="evidence" value="ECO:0007669"/>
    <property type="project" value="UniProtKB-KW"/>
</dbReference>
<dbReference type="GO" id="GO:0006310">
    <property type="term" value="P:DNA recombination"/>
    <property type="evidence" value="ECO:0007669"/>
    <property type="project" value="UniProtKB-UniRule"/>
</dbReference>
<dbReference type="GO" id="GO:0006281">
    <property type="term" value="P:DNA repair"/>
    <property type="evidence" value="ECO:0007669"/>
    <property type="project" value="UniProtKB-UniRule"/>
</dbReference>
<dbReference type="CDD" id="cd01025">
    <property type="entry name" value="TOPRIM_recR"/>
    <property type="match status" value="1"/>
</dbReference>
<dbReference type="Gene3D" id="3.30.60.80">
    <property type="match status" value="1"/>
</dbReference>
<dbReference type="Gene3D" id="3.40.1360.10">
    <property type="match status" value="1"/>
</dbReference>
<dbReference type="Gene3D" id="6.10.250.240">
    <property type="match status" value="1"/>
</dbReference>
<dbReference type="Gene3D" id="1.10.8.420">
    <property type="entry name" value="RecR Domain 1"/>
    <property type="match status" value="1"/>
</dbReference>
<dbReference type="HAMAP" id="MF_00017">
    <property type="entry name" value="RecR"/>
    <property type="match status" value="1"/>
</dbReference>
<dbReference type="InterPro" id="IPR000093">
    <property type="entry name" value="DNA_Rcmb_RecR"/>
</dbReference>
<dbReference type="InterPro" id="IPR023627">
    <property type="entry name" value="Rcmb_RecR"/>
</dbReference>
<dbReference type="InterPro" id="IPR015967">
    <property type="entry name" value="Rcmb_RecR_Znf"/>
</dbReference>
<dbReference type="InterPro" id="IPR006171">
    <property type="entry name" value="TOPRIM_dom"/>
</dbReference>
<dbReference type="InterPro" id="IPR034137">
    <property type="entry name" value="TOPRIM_RecR"/>
</dbReference>
<dbReference type="NCBIfam" id="TIGR00615">
    <property type="entry name" value="recR"/>
    <property type="match status" value="1"/>
</dbReference>
<dbReference type="PANTHER" id="PTHR30446">
    <property type="entry name" value="RECOMBINATION PROTEIN RECR"/>
    <property type="match status" value="1"/>
</dbReference>
<dbReference type="PANTHER" id="PTHR30446:SF0">
    <property type="entry name" value="RECOMBINATION PROTEIN RECR"/>
    <property type="match status" value="1"/>
</dbReference>
<dbReference type="Pfam" id="PF21175">
    <property type="entry name" value="RecR_C"/>
    <property type="match status" value="1"/>
</dbReference>
<dbReference type="Pfam" id="PF21176">
    <property type="entry name" value="RecR_HhH"/>
    <property type="match status" value="1"/>
</dbReference>
<dbReference type="Pfam" id="PF13662">
    <property type="entry name" value="Toprim_4"/>
    <property type="match status" value="1"/>
</dbReference>
<dbReference type="SMART" id="SM00493">
    <property type="entry name" value="TOPRIM"/>
    <property type="match status" value="1"/>
</dbReference>
<dbReference type="SUPFAM" id="SSF111304">
    <property type="entry name" value="Recombination protein RecR"/>
    <property type="match status" value="1"/>
</dbReference>
<dbReference type="PROSITE" id="PS01300">
    <property type="entry name" value="RECR"/>
    <property type="match status" value="1"/>
</dbReference>
<dbReference type="PROSITE" id="PS50880">
    <property type="entry name" value="TOPRIM"/>
    <property type="match status" value="1"/>
</dbReference>
<sequence length="198" mass="21768">MLYPTPIAKLIDSFSKLPGIGAKTATRLAFYTISMSDEDVNDFAKNLLAAKRELTYCSVCGRLTDDDPCIICTDETRDRTKILVVEDSKDVSAMEKIQEYRGLYHVLQGLISPMNGVGPDDINLKSLITRLMDSEVDEVIIATNATADGEATSMYISRVLKPAGIKVTRLARGLAVGSDIEYADEVTLLRAIENRTEL</sequence>